<gene>
    <name type="primary">PTRHD1</name>
    <name type="synonym">C2orf79</name>
</gene>
<proteinExistence type="evidence at protein level"/>
<organism>
    <name type="scientific">Homo sapiens</name>
    <name type="common">Human</name>
    <dbReference type="NCBI Taxonomy" id="9606"/>
    <lineage>
        <taxon>Eukaryota</taxon>
        <taxon>Metazoa</taxon>
        <taxon>Chordata</taxon>
        <taxon>Craniata</taxon>
        <taxon>Vertebrata</taxon>
        <taxon>Euteleostomi</taxon>
        <taxon>Mammalia</taxon>
        <taxon>Eutheria</taxon>
        <taxon>Euarchontoglires</taxon>
        <taxon>Primates</taxon>
        <taxon>Haplorrhini</taxon>
        <taxon>Catarrhini</taxon>
        <taxon>Hominidae</taxon>
        <taxon>Homo</taxon>
    </lineage>
</organism>
<feature type="chain" id="PRO_0000321818" description="Putative peptidyl-tRNA hydrolase PTRHD1">
    <location>
        <begin position="1"/>
        <end position="140"/>
    </location>
</feature>
<feature type="sequence variant" id="VAR_078547" description="In NEDPBA; uncertain significance; dbSNP:rs781442277." evidence="1">
    <original>C</original>
    <variation>Y</variation>
    <location>
        <position position="52"/>
    </location>
</feature>
<feature type="sequence variant" id="VAR_078548" description="In NEDPBA; uncertain significance; dbSNP:rs1057519631." evidence="3">
    <original>H</original>
    <variation>Y</variation>
    <location>
        <position position="53"/>
    </location>
</feature>
<feature type="sequence variant" id="VAR_089408" description="In NEDPBA; uncertain significance; dbSNP:rs1238843879." evidence="7">
    <original>R</original>
    <variation>Q</variation>
    <location>
        <position position="122"/>
    </location>
</feature>
<feature type="sequence variant" id="VAR_089409" description="In NEDPBA; uncertain significance; dbSNP:rs753386543." evidence="6">
    <original>R</original>
    <variation>W</variation>
    <location>
        <position position="122"/>
    </location>
</feature>
<sequence>MHRGVGPAFRVVRKMAASGAEPQVLVQYLVLRKDLSQAPFSWPAGALVAQACHAATAALHTHRDHPHTAAYLQELGRMRKVVLEAPDETTLKELAETLQQKNIDHMLWLEQPENIATCIALRPYPKEEVGQYLKKFRLFK</sequence>
<reference key="1">
    <citation type="submission" date="2005-09" db="EMBL/GenBank/DDBJ databases">
        <authorList>
            <person name="Mural R.J."/>
            <person name="Istrail S."/>
            <person name="Sutton G.G."/>
            <person name="Florea L."/>
            <person name="Halpern A.L."/>
            <person name="Mobarry C.M."/>
            <person name="Lippert R."/>
            <person name="Walenz B."/>
            <person name="Shatkay H."/>
            <person name="Dew I."/>
            <person name="Miller J.R."/>
            <person name="Flanigan M.J."/>
            <person name="Edwards N.J."/>
            <person name="Bolanos R."/>
            <person name="Fasulo D."/>
            <person name="Halldorsson B.V."/>
            <person name="Hannenhalli S."/>
            <person name="Turner R."/>
            <person name="Yooseph S."/>
            <person name="Lu F."/>
            <person name="Nusskern D.R."/>
            <person name="Shue B.C."/>
            <person name="Zheng X.H."/>
            <person name="Zhong F."/>
            <person name="Delcher A.L."/>
            <person name="Huson D.H."/>
            <person name="Kravitz S.A."/>
            <person name="Mouchard L."/>
            <person name="Reinert K."/>
            <person name="Remington K.A."/>
            <person name="Clark A.G."/>
            <person name="Waterman M.S."/>
            <person name="Eichler E.E."/>
            <person name="Adams M.D."/>
            <person name="Hunkapiller M.W."/>
            <person name="Myers E.W."/>
            <person name="Venter J.C."/>
        </authorList>
    </citation>
    <scope>NUCLEOTIDE SEQUENCE [LARGE SCALE GENOMIC DNA]</scope>
</reference>
<reference key="2">
    <citation type="journal article" date="2004" name="Genome Res.">
        <title>The status, quality, and expansion of the NIH full-length cDNA project: the Mammalian Gene Collection (MGC).</title>
        <authorList>
            <consortium name="The MGC Project Team"/>
        </authorList>
    </citation>
    <scope>NUCLEOTIDE SEQUENCE [LARGE SCALE MRNA]</scope>
    <source>
        <tissue>Neuroblastoma</tissue>
    </source>
</reference>
<reference key="3">
    <citation type="journal article" date="2009" name="Science">
        <title>Lysine acetylation targets protein complexes and co-regulates major cellular functions.</title>
        <authorList>
            <person name="Choudhary C."/>
            <person name="Kumar C."/>
            <person name="Gnad F."/>
            <person name="Nielsen M.L."/>
            <person name="Rehman M."/>
            <person name="Walther T.C."/>
            <person name="Olsen J.V."/>
            <person name="Mann M."/>
        </authorList>
    </citation>
    <scope>IDENTIFICATION BY MASS SPECTROMETRY [LARGE SCALE ANALYSIS]</scope>
</reference>
<reference key="4">
    <citation type="journal article" date="2011" name="BMC Syst. Biol.">
        <title>Initial characterization of the human central proteome.</title>
        <authorList>
            <person name="Burkard T.R."/>
            <person name="Planyavsky M."/>
            <person name="Kaupe I."/>
            <person name="Breitwieser F.P."/>
            <person name="Buerckstuemmer T."/>
            <person name="Bennett K.L."/>
            <person name="Superti-Furga G."/>
            <person name="Colinge J."/>
        </authorList>
    </citation>
    <scope>IDENTIFICATION BY MASS SPECTROMETRY [LARGE SCALE ANALYSIS]</scope>
</reference>
<reference key="5">
    <citation type="journal article" date="2014" name="J. Proteomics">
        <title>An enzyme assisted RP-RPLC approach for in-depth analysis of human liver phosphoproteome.</title>
        <authorList>
            <person name="Bian Y."/>
            <person name="Song C."/>
            <person name="Cheng K."/>
            <person name="Dong M."/>
            <person name="Wang F."/>
            <person name="Huang J."/>
            <person name="Sun D."/>
            <person name="Wang L."/>
            <person name="Ye M."/>
            <person name="Zou H."/>
        </authorList>
    </citation>
    <scope>IDENTIFICATION BY MASS SPECTROMETRY [LARGE SCALE ANALYSIS]</scope>
    <source>
        <tissue>Liver</tissue>
    </source>
</reference>
<reference key="6">
    <citation type="journal article" date="2016" name="Protein Expr. Purif.">
        <title>Expression, purification, and buffer solubility optimization of the putative human peptidyl-tRNA hydrolase PTRHD1.</title>
        <authorList>
            <person name="Burks G.L."/>
            <person name="McFeeters H."/>
            <person name="McFeeters R.L."/>
        </authorList>
    </citation>
    <scope>FUNCTION</scope>
</reference>
<reference key="7">
    <citation type="journal article" date="2018" name="Mov. Disord.">
        <title>PTRHD1 Loss-of-function mutation in an african family with juvenile-onset Parkinsonism and intellectual disability.</title>
        <authorList>
            <person name="Kuipers D.J.S."/>
            <person name="Carr J."/>
            <person name="Bardien S."/>
            <person name="Thomas P."/>
            <person name="Sebate B."/>
            <person name="Breedveld G.J."/>
            <person name="van Minkelen R."/>
            <person name="Brouwer R.W.W."/>
            <person name="van Ijcken W.F.J."/>
            <person name="van Slegtenhorst M.A."/>
            <person name="Bonifati V."/>
            <person name="Quadri M."/>
        </authorList>
    </citation>
    <scope>INVOLVEMENT IN NEDPBA</scope>
</reference>
<reference key="8">
    <citation type="journal article" date="2021" name="Mov. Disord. Clin. Pract.">
        <title>Biallelic PTRHD1 Frameshift Variants Associated with Intellectual Disability, Spasticity, and Parkinsonism.</title>
        <authorList>
            <person name="Al-Kasbi G."/>
            <person name="Al-Saegh A."/>
            <person name="Al-Qassabi A."/>
            <person name="Al-Jabry T."/>
            <person name="Zadjali F."/>
            <person name="Al-Yahyaee S."/>
            <person name="Al-Maawali A."/>
        </authorList>
    </citation>
    <scope>INVOLVEMENT IN NEDPBA</scope>
</reference>
<reference key="9">
    <citation type="journal article" date="2016" name="Mov. Disord.">
        <title>Mutation in ADORA1 identified as likely cause of early-onset parkinsonism and cognitive dysfunction.</title>
        <authorList>
            <person name="Jaberi E."/>
            <person name="Rohani M."/>
            <person name="Shahidi G.A."/>
            <person name="Nafissi S."/>
            <person name="Arefian E."/>
            <person name="Soleimani M."/>
            <person name="Moghadam A."/>
            <person name="Arzenani M.K."/>
            <person name="Keramatian F."/>
            <person name="Klotzle B."/>
            <person name="Fan J.B."/>
            <person name="Turk C."/>
            <person name="Steemers F."/>
            <person name="Elahi E."/>
        </authorList>
    </citation>
    <scope>VARIANT NEDPBA TYR-52</scope>
    <scope>INVOLVEMENT IN NEDPBA</scope>
</reference>
<reference key="10">
    <citation type="journal article" date="2017" name="Mov. Disord.">
        <title>PTRHD1 (C2orf79) mutations lead to autosomal-recessive intellectual disability and parkinsonism.</title>
        <authorList>
            <person name="Khodadadi H."/>
            <person name="Azcona L.J."/>
            <person name="Aghamollaii V."/>
            <person name="Omrani M.D."/>
            <person name="Garshasbi M."/>
            <person name="Taghavi S."/>
            <person name="Tafakhori A."/>
            <person name="Shahidi G.A."/>
            <person name="Jamshidi J."/>
            <person name="Darvish H."/>
            <person name="Paisan-Ruiz C."/>
        </authorList>
    </citation>
    <scope>VARIANT NEDPBA TYR-53</scope>
    <scope>INVOLVEMENT IN NEDPBA</scope>
</reference>
<reference key="11">
    <citation type="journal article" date="2021" name="Arch. Iran. Med.">
        <title>The PTRHD1 Mutation in Intellectual Disability.</title>
        <authorList>
            <person name="Cheraghi S."/>
            <person name="Moghbelinejad S."/>
            <person name="Najmabadi H."/>
            <person name="Kahrizi K."/>
            <person name="Najafipour R."/>
        </authorList>
    </citation>
    <scope>VARIANT NEDPBA TRP-122</scope>
    <scope>INVOLVEMENT IN NEDPBA</scope>
</reference>
<reference key="12">
    <citation type="journal article" date="2024" name="Neuropediatrics">
        <title>A Homozygous PTRHD1 Missense Variant (p.Arg122Gln) in an Individual with Intellectual Disability, Generalized Epilepsy, and Juvenile Parkinsonism.</title>
        <authorList>
            <person name="Gebert J."/>
            <person name="Brunet T."/>
            <person name="Wagner M."/>
            <person name="Rath J."/>
            <person name="Aull-Watschinger S."/>
            <person name="Pataraia E."/>
            <person name="Krenn M."/>
        </authorList>
    </citation>
    <scope>VARIANT NEDPBA GLN-122</scope>
    <scope>INVOLVEMENT IN NEDPBA</scope>
</reference>
<evidence type="ECO:0000269" key="1">
    <source>
    </source>
</evidence>
<evidence type="ECO:0000269" key="2">
    <source>
    </source>
</evidence>
<evidence type="ECO:0000269" key="3">
    <source>
    </source>
</evidence>
<evidence type="ECO:0000269" key="4">
    <source>
    </source>
</evidence>
<evidence type="ECO:0000269" key="5">
    <source>
    </source>
</evidence>
<evidence type="ECO:0000269" key="6">
    <source>
    </source>
</evidence>
<evidence type="ECO:0000269" key="7">
    <source>
    </source>
</evidence>
<evidence type="ECO:0000305" key="8"/>
<dbReference type="EC" id="3.1.1.29" evidence="8"/>
<dbReference type="EMBL" id="CH471053">
    <property type="protein sequence ID" value="EAX00745.1"/>
    <property type="molecule type" value="Genomic_DNA"/>
</dbReference>
<dbReference type="EMBL" id="BC073803">
    <property type="protein sequence ID" value="AAH73803.1"/>
    <property type="molecule type" value="mRNA"/>
</dbReference>
<dbReference type="CCDS" id="CCDS33156.1"/>
<dbReference type="RefSeq" id="NP_001013685.1">
    <property type="nucleotide sequence ID" value="NM_001013663.2"/>
</dbReference>
<dbReference type="SMR" id="Q6GMV3"/>
<dbReference type="BioGRID" id="133896">
    <property type="interactions" value="40"/>
</dbReference>
<dbReference type="FunCoup" id="Q6GMV3">
    <property type="interactions" value="580"/>
</dbReference>
<dbReference type="IntAct" id="Q6GMV3">
    <property type="interactions" value="10"/>
</dbReference>
<dbReference type="STRING" id="9606.ENSP00000330389"/>
<dbReference type="GlyGen" id="Q6GMV3">
    <property type="glycosylation" value="1 site, 1 O-linked glycan (1 site)"/>
</dbReference>
<dbReference type="iPTMnet" id="Q6GMV3"/>
<dbReference type="PhosphoSitePlus" id="Q6GMV3"/>
<dbReference type="SwissPalm" id="Q6GMV3"/>
<dbReference type="BioMuta" id="PTRHD1"/>
<dbReference type="DMDM" id="74736452"/>
<dbReference type="jPOST" id="Q6GMV3"/>
<dbReference type="MassIVE" id="Q6GMV3"/>
<dbReference type="PaxDb" id="9606-ENSP00000330389"/>
<dbReference type="PeptideAtlas" id="Q6GMV3"/>
<dbReference type="ProteomicsDB" id="66305"/>
<dbReference type="Pumba" id="Q6GMV3"/>
<dbReference type="TopDownProteomics" id="Q6GMV3"/>
<dbReference type="Antibodypedia" id="13171">
    <property type="antibodies" value="10 antibodies from 8 providers"/>
</dbReference>
<dbReference type="DNASU" id="391356"/>
<dbReference type="Ensembl" id="ENST00000328379.6">
    <property type="protein sequence ID" value="ENSP00000330389.4"/>
    <property type="gene ID" value="ENSG00000184924.6"/>
</dbReference>
<dbReference type="GeneID" id="391356"/>
<dbReference type="KEGG" id="hsa:391356"/>
<dbReference type="MANE-Select" id="ENST00000328379.6">
    <property type="protein sequence ID" value="ENSP00000330389.4"/>
    <property type="RefSeq nucleotide sequence ID" value="NM_001013663.2"/>
    <property type="RefSeq protein sequence ID" value="NP_001013685.1"/>
</dbReference>
<dbReference type="UCSC" id="uc002rfm.4">
    <property type="organism name" value="human"/>
</dbReference>
<dbReference type="AGR" id="HGNC:33782"/>
<dbReference type="CTD" id="391356"/>
<dbReference type="DisGeNET" id="391356"/>
<dbReference type="GeneCards" id="PTRHD1"/>
<dbReference type="HGNC" id="HGNC:33782">
    <property type="gene designation" value="PTRHD1"/>
</dbReference>
<dbReference type="HPA" id="ENSG00000184924">
    <property type="expression patterns" value="Low tissue specificity"/>
</dbReference>
<dbReference type="MalaCards" id="PTRHD1"/>
<dbReference type="MIM" id="617342">
    <property type="type" value="gene"/>
</dbReference>
<dbReference type="MIM" id="620747">
    <property type="type" value="phenotype"/>
</dbReference>
<dbReference type="neXtProt" id="NX_Q6GMV3"/>
<dbReference type="OpenTargets" id="ENSG00000184924"/>
<dbReference type="PharmGKB" id="PA162379611"/>
<dbReference type="VEuPathDB" id="HostDB:ENSG00000184924"/>
<dbReference type="eggNOG" id="KOG3305">
    <property type="taxonomic scope" value="Eukaryota"/>
</dbReference>
<dbReference type="GeneTree" id="ENSGT00500000044959"/>
<dbReference type="HOGENOM" id="CLU_119261_0_1_1"/>
<dbReference type="InParanoid" id="Q6GMV3"/>
<dbReference type="OMA" id="AIIAQCC"/>
<dbReference type="OrthoDB" id="201213at2759"/>
<dbReference type="PAN-GO" id="Q6GMV3">
    <property type="GO annotations" value="0 GO annotations based on evolutionary models"/>
</dbReference>
<dbReference type="PhylomeDB" id="Q6GMV3"/>
<dbReference type="TreeFam" id="TF353726"/>
<dbReference type="BRENDA" id="3.1.1.29">
    <property type="organism ID" value="2681"/>
</dbReference>
<dbReference type="PathwayCommons" id="Q6GMV3"/>
<dbReference type="SignaLink" id="Q6GMV3"/>
<dbReference type="BioGRID-ORCS" id="391356">
    <property type="hits" value="11 hits in 1155 CRISPR screens"/>
</dbReference>
<dbReference type="GenomeRNAi" id="391356"/>
<dbReference type="Pharos" id="Q6GMV3">
    <property type="development level" value="Tdark"/>
</dbReference>
<dbReference type="PRO" id="PR:Q6GMV3"/>
<dbReference type="Proteomes" id="UP000005640">
    <property type="component" value="Chromosome 2"/>
</dbReference>
<dbReference type="RNAct" id="Q6GMV3">
    <property type="molecule type" value="protein"/>
</dbReference>
<dbReference type="Bgee" id="ENSG00000184924">
    <property type="expression patterns" value="Expressed in ileal mucosa and 186 other cell types or tissues"/>
</dbReference>
<dbReference type="GO" id="GO:0005739">
    <property type="term" value="C:mitochondrion"/>
    <property type="evidence" value="ECO:0006056"/>
    <property type="project" value="FlyBase"/>
</dbReference>
<dbReference type="GO" id="GO:0004045">
    <property type="term" value="F:peptidyl-tRNA hydrolase activity"/>
    <property type="evidence" value="ECO:0007669"/>
    <property type="project" value="UniProtKB-EC"/>
</dbReference>
<dbReference type="Gene3D" id="3.40.1490.10">
    <property type="entry name" value="Bit1"/>
    <property type="match status" value="1"/>
</dbReference>
<dbReference type="InterPro" id="IPR023476">
    <property type="entry name" value="Pep_tRNA_hydro_II_dom_sf"/>
</dbReference>
<dbReference type="InterPro" id="IPR002833">
    <property type="entry name" value="PTH2"/>
</dbReference>
<dbReference type="InterPro" id="IPR042237">
    <property type="entry name" value="PTRHD1"/>
</dbReference>
<dbReference type="PANTHER" id="PTHR46194">
    <property type="entry name" value="PEPTIDYL-TRNA HYDROLASE PTRHD1-RELATED"/>
    <property type="match status" value="1"/>
</dbReference>
<dbReference type="PANTHER" id="PTHR46194:SF1">
    <property type="entry name" value="PEPTIDYL-TRNA HYDROLASE PTRHD1-RELATED"/>
    <property type="match status" value="1"/>
</dbReference>
<dbReference type="Pfam" id="PF01981">
    <property type="entry name" value="PTH2"/>
    <property type="match status" value="1"/>
</dbReference>
<dbReference type="SUPFAM" id="SSF102462">
    <property type="entry name" value="Peptidyl-tRNA hydrolase II"/>
    <property type="match status" value="1"/>
</dbReference>
<keyword id="KW-0378">Hydrolase</keyword>
<keyword id="KW-0991">Intellectual disability</keyword>
<keyword id="KW-0908">Parkinsonism</keyword>
<keyword id="KW-1267">Proteomics identification</keyword>
<keyword id="KW-1185">Reference proteome</keyword>
<name>PTRD1_HUMAN</name>
<accession>Q6GMV3</accession>
<protein>
    <recommendedName>
        <fullName evidence="8">Putative peptidyl-tRNA hydrolase PTRHD1</fullName>
        <ecNumber evidence="8">3.1.1.29</ecNumber>
    </recommendedName>
    <alternativeName>
        <fullName>Peptidyl-tRNA hydrolase domain-containing protein 1</fullName>
    </alternativeName>
</protein>
<comment type="function">
    <text evidence="2 8">As a putative peptidyl-tRNA hydrolase, it might be involved in releasing tRNAs from the ribosome during protein synthesis (Probable). Some evidence, however, suggests that it lacks peptidyl-tRNA hydrolase activity (PubMed:27235175).</text>
</comment>
<comment type="catalytic activity">
    <reaction evidence="8">
        <text>an N-acyl-L-alpha-aminoacyl-tRNA + H2O = an N-acyl-L-amino acid + a tRNA + H(+)</text>
        <dbReference type="Rhea" id="RHEA:54448"/>
        <dbReference type="Rhea" id="RHEA-COMP:10123"/>
        <dbReference type="Rhea" id="RHEA-COMP:13883"/>
        <dbReference type="ChEBI" id="CHEBI:15377"/>
        <dbReference type="ChEBI" id="CHEBI:15378"/>
        <dbReference type="ChEBI" id="CHEBI:59874"/>
        <dbReference type="ChEBI" id="CHEBI:78442"/>
        <dbReference type="ChEBI" id="CHEBI:138191"/>
        <dbReference type="EC" id="3.1.1.29"/>
    </reaction>
</comment>
<comment type="interaction">
    <interactant intactId="EBI-12807218">
        <id>Q6GMV3</id>
    </interactant>
    <interactant intactId="EBI-2856301">
        <id>Q13156</id>
        <label>RPA4</label>
    </interactant>
    <organismsDiffer>false</organismsDiffer>
    <experiments>3</experiments>
</comment>
<comment type="interaction">
    <interactant intactId="EBI-12807218">
        <id>Q6GMV3</id>
    </interactant>
    <interactant intactId="EBI-746981">
        <id>Q969E8</id>
        <label>TSR2</label>
    </interactant>
    <organismsDiffer>false</organismsDiffer>
    <experiments>3</experiments>
</comment>
<comment type="disease" evidence="1 3 4 5 6 7">
    <disease id="DI-06861">
        <name>Neurodevelopmental disorder with early-onset parkinsonism and behavioral abnormalities</name>
        <acronym>NEDPBA</acronym>
        <description>An autosomal recessive disorder manifesting in late infancy or early childhood. It is characterized by developmental delay, intellectual disability, learning difficulties, behavioral abnormalities, and parkinsonism and spasticity usually developing in the third or fourth decades.</description>
        <dbReference type="MIM" id="620747"/>
    </disease>
    <text>The disease may be caused by variants affecting the gene represented in this entry.</text>
</comment>
<comment type="similarity">
    <text evidence="8">Belongs to the PTH2 family. PTRHD1 subfamily.</text>
</comment>